<proteinExistence type="inferred from homology"/>
<comment type="function">
    <text evidence="1">Proton-coupled antiporter flippase that catalyzes the translocation, from the inner to the outer leaflet of the cell membrane, of the lipid-linked disaccharide (anchor-LLD) that anchors lipoteichoic acids (LTA) to the cell membrane.</text>
</comment>
<comment type="pathway">
    <text evidence="1">Cell wall biogenesis; lipoteichoic acid biosynthesis.</text>
</comment>
<comment type="subcellular location">
    <subcellularLocation>
        <location evidence="1">Cell membrane</location>
        <topology evidence="1">Multi-pass membrane protein</topology>
    </subcellularLocation>
</comment>
<comment type="similarity">
    <text evidence="3">Belongs to the major facilitator superfamily. LtaA family.</text>
</comment>
<comment type="sequence caution" evidence="3">
    <conflict type="erroneous initiation">
        <sequence resource="EMBL-CDS" id="BAE05252"/>
    </conflict>
</comment>
<keyword id="KW-0050">Antiport</keyword>
<keyword id="KW-1003">Cell membrane</keyword>
<keyword id="KW-0445">Lipid transport</keyword>
<keyword id="KW-0472">Membrane</keyword>
<keyword id="KW-0812">Transmembrane</keyword>
<keyword id="KW-1133">Transmembrane helix</keyword>
<keyword id="KW-0813">Transport</keyword>
<keyword id="KW-0843">Virulence</keyword>
<evidence type="ECO:0000250" key="1">
    <source>
        <dbReference type="UniProtKB" id="Q2FZP8"/>
    </source>
</evidence>
<evidence type="ECO:0000255" key="2"/>
<evidence type="ECO:0000305" key="3"/>
<sequence>MPDSSLSNKGISKNFKIMLVILFLMEFARGMYVLSYVNYLPTVTSIAVAVTSAALSIHFISDAATNFVIGFLLKKFGTKLVLTLGFLLAFISLFLVIWFPTNPIVIILSAIMLGIAVSPIWVIMLSSVEEAQRGKQMGYVYFAWLLGLLVGWAFMNVLVKLHPTRFAFMMSLVVVIAWVLYYFVDIKLTNYNTKPVSEQLGQIVDVMKRHLVLFPGILLQGASISALLPILPTYATKVVGVSTIEYTIAIAIGGAGCAFSMLFLSKIIDKNSKGFMYAVIFTGFILFTAFIFGLSLVTNILIVWIVAIFIGLMYGILLPAWNTFMAGQIDPAEQEETWGVFNSVQGFGSMIGPLFGGLIAQFSNGLNNTFYFSAAIFLVLAIFYGVYFVKYRGKANRF</sequence>
<name>LTAA_STAHJ</name>
<reference key="1">
    <citation type="journal article" date="2005" name="J. Bacteriol.">
        <title>Whole-genome sequencing of Staphylococcus haemolyticus uncovers the extreme plasticity of its genome and the evolution of human-colonizing staphylococcal species.</title>
        <authorList>
            <person name="Takeuchi F."/>
            <person name="Watanabe S."/>
            <person name="Baba T."/>
            <person name="Yuzawa H."/>
            <person name="Ito T."/>
            <person name="Morimoto Y."/>
            <person name="Kuroda M."/>
            <person name="Cui L."/>
            <person name="Takahashi M."/>
            <person name="Ankai A."/>
            <person name="Baba S."/>
            <person name="Fukui S."/>
            <person name="Lee J.C."/>
            <person name="Hiramatsu K."/>
        </authorList>
    </citation>
    <scope>NUCLEOTIDE SEQUENCE [LARGE SCALE GENOMIC DNA]</scope>
    <source>
        <strain>JCSC1435</strain>
    </source>
</reference>
<feature type="chain" id="PRO_0000287163" description="Proton-coupled antiporter flippase LtaA">
    <location>
        <begin position="1"/>
        <end position="398"/>
    </location>
</feature>
<feature type="transmembrane region" description="Helical" evidence="2">
    <location>
        <begin position="15"/>
        <end position="34"/>
    </location>
</feature>
<feature type="transmembrane region" description="Helical" evidence="2">
    <location>
        <begin position="46"/>
        <end position="73"/>
    </location>
</feature>
<feature type="transmembrane region" description="Helical" evidence="2">
    <location>
        <begin position="80"/>
        <end position="99"/>
    </location>
</feature>
<feature type="transmembrane region" description="Helical" evidence="2">
    <location>
        <begin position="105"/>
        <end position="126"/>
    </location>
</feature>
<feature type="transmembrane region" description="Helical" evidence="2">
    <location>
        <begin position="138"/>
        <end position="159"/>
    </location>
</feature>
<feature type="transmembrane region" description="Helical" evidence="2">
    <location>
        <begin position="165"/>
        <end position="184"/>
    </location>
</feature>
<feature type="transmembrane region" description="Helical" evidence="2">
    <location>
        <begin position="211"/>
        <end position="231"/>
    </location>
</feature>
<feature type="transmembrane region" description="Helical" evidence="2">
    <location>
        <begin position="243"/>
        <end position="263"/>
    </location>
</feature>
<feature type="transmembrane region" description="Helical" evidence="2">
    <location>
        <begin position="275"/>
        <end position="294"/>
    </location>
</feature>
<feature type="transmembrane region" description="Helical" evidence="2">
    <location>
        <begin position="300"/>
        <end position="320"/>
    </location>
</feature>
<feature type="transmembrane region" description="Helical" evidence="2">
    <location>
        <begin position="340"/>
        <end position="363"/>
    </location>
</feature>
<feature type="transmembrane region" description="Helical" evidence="2">
    <location>
        <begin position="369"/>
        <end position="389"/>
    </location>
</feature>
<gene>
    <name type="primary">ltaA</name>
    <name type="ordered locus">SH1943</name>
</gene>
<dbReference type="EMBL" id="AP006716">
    <property type="protein sequence ID" value="BAE05252.1"/>
    <property type="status" value="ALT_INIT"/>
    <property type="molecule type" value="Genomic_DNA"/>
</dbReference>
<dbReference type="RefSeq" id="WP_029376686.1">
    <property type="nucleotide sequence ID" value="NC_007168.1"/>
</dbReference>
<dbReference type="SMR" id="Q4L523"/>
<dbReference type="KEGG" id="sha:SH1943"/>
<dbReference type="eggNOG" id="COG2814">
    <property type="taxonomic scope" value="Bacteria"/>
</dbReference>
<dbReference type="HOGENOM" id="CLU_054518_0_0_9"/>
<dbReference type="UniPathway" id="UPA00556"/>
<dbReference type="Proteomes" id="UP000000543">
    <property type="component" value="Chromosome"/>
</dbReference>
<dbReference type="GO" id="GO:0005886">
    <property type="term" value="C:plasma membrane"/>
    <property type="evidence" value="ECO:0007669"/>
    <property type="project" value="UniProtKB-SubCell"/>
</dbReference>
<dbReference type="GO" id="GO:0015297">
    <property type="term" value="F:antiporter activity"/>
    <property type="evidence" value="ECO:0007669"/>
    <property type="project" value="UniProtKB-KW"/>
</dbReference>
<dbReference type="GO" id="GO:0006869">
    <property type="term" value="P:lipid transport"/>
    <property type="evidence" value="ECO:0007669"/>
    <property type="project" value="UniProtKB-KW"/>
</dbReference>
<dbReference type="GO" id="GO:0070395">
    <property type="term" value="P:lipoteichoic acid biosynthetic process"/>
    <property type="evidence" value="ECO:0007669"/>
    <property type="project" value="UniProtKB-UniPathway"/>
</dbReference>
<dbReference type="CDD" id="cd17325">
    <property type="entry name" value="MFS_MdtG_SLC18_like"/>
    <property type="match status" value="1"/>
</dbReference>
<dbReference type="Gene3D" id="1.20.1250.20">
    <property type="entry name" value="MFS general substrate transporter like domains"/>
    <property type="match status" value="2"/>
</dbReference>
<dbReference type="InterPro" id="IPR011701">
    <property type="entry name" value="MFS"/>
</dbReference>
<dbReference type="InterPro" id="IPR020846">
    <property type="entry name" value="MFS_dom"/>
</dbReference>
<dbReference type="InterPro" id="IPR036259">
    <property type="entry name" value="MFS_trans_sf"/>
</dbReference>
<dbReference type="InterPro" id="IPR050171">
    <property type="entry name" value="MFS_Transporters"/>
</dbReference>
<dbReference type="InterPro" id="IPR001958">
    <property type="entry name" value="Tet-R_TetA/multi-R_MdtG-like"/>
</dbReference>
<dbReference type="NCBIfam" id="NF047396">
    <property type="entry name" value="MFS_flip_LtaA"/>
    <property type="match status" value="1"/>
</dbReference>
<dbReference type="PANTHER" id="PTHR23517:SF3">
    <property type="entry name" value="INTEGRAL MEMBRANE TRANSPORT PROTEIN"/>
    <property type="match status" value="1"/>
</dbReference>
<dbReference type="PANTHER" id="PTHR23517">
    <property type="entry name" value="RESISTANCE PROTEIN MDTM, PUTATIVE-RELATED-RELATED"/>
    <property type="match status" value="1"/>
</dbReference>
<dbReference type="Pfam" id="PF07690">
    <property type="entry name" value="MFS_1"/>
    <property type="match status" value="1"/>
</dbReference>
<dbReference type="PRINTS" id="PR01035">
    <property type="entry name" value="TCRTETA"/>
</dbReference>
<dbReference type="SUPFAM" id="SSF103473">
    <property type="entry name" value="MFS general substrate transporter"/>
    <property type="match status" value="1"/>
</dbReference>
<dbReference type="PROSITE" id="PS50850">
    <property type="entry name" value="MFS"/>
    <property type="match status" value="1"/>
</dbReference>
<organism>
    <name type="scientific">Staphylococcus haemolyticus (strain JCSC1435)</name>
    <dbReference type="NCBI Taxonomy" id="279808"/>
    <lineage>
        <taxon>Bacteria</taxon>
        <taxon>Bacillati</taxon>
        <taxon>Bacillota</taxon>
        <taxon>Bacilli</taxon>
        <taxon>Bacillales</taxon>
        <taxon>Staphylococcaceae</taxon>
        <taxon>Staphylococcus</taxon>
    </lineage>
</organism>
<protein>
    <recommendedName>
        <fullName evidence="1">Proton-coupled antiporter flippase LtaA</fullName>
    </recommendedName>
    <alternativeName>
        <fullName evidence="1">Lipoteichoic acid protein A</fullName>
    </alternativeName>
</protein>
<accession>Q4L523</accession>